<dbReference type="EMBL" id="AF181719">
    <property type="protein sequence ID" value="AAF78364.1"/>
    <property type="molecule type" value="mRNA"/>
</dbReference>
<dbReference type="EMBL" id="BC012062">
    <property type="protein sequence ID" value="AAH12062.1"/>
    <property type="molecule type" value="mRNA"/>
</dbReference>
<dbReference type="EMBL" id="AK056850">
    <property type="protein sequence ID" value="BAB71295.1"/>
    <property type="status" value="ALT_INIT"/>
    <property type="molecule type" value="mRNA"/>
</dbReference>
<dbReference type="CCDS" id="CCDS12065.1">
    <molecule id="Q96EP5-1"/>
</dbReference>
<dbReference type="CCDS" id="CCDS12066.1">
    <molecule id="Q96EP5-2"/>
</dbReference>
<dbReference type="RefSeq" id="NP_061832.2">
    <molecule id="Q96EP5-1"/>
    <property type="nucleotide sequence ID" value="NM_018959.3"/>
</dbReference>
<dbReference type="RefSeq" id="NP_733829.1">
    <molecule id="Q96EP5-2"/>
    <property type="nucleotide sequence ID" value="NM_170711.3"/>
</dbReference>
<dbReference type="RefSeq" id="XP_047294548.1">
    <molecule id="Q96EP5-2"/>
    <property type="nucleotide sequence ID" value="XM_047438592.1"/>
</dbReference>
<dbReference type="RefSeq" id="XP_054176487.1">
    <molecule id="Q96EP5-2"/>
    <property type="nucleotide sequence ID" value="XM_054320512.1"/>
</dbReference>
<dbReference type="PDB" id="2DGS">
    <property type="method" value="NMR"/>
    <property type="chains" value="A=110-195"/>
</dbReference>
<dbReference type="PDB" id="2DH8">
    <property type="method" value="NMR"/>
    <property type="chains" value="A=1-92"/>
</dbReference>
<dbReference type="PDBsum" id="2DGS"/>
<dbReference type="PDBsum" id="2DH8"/>
<dbReference type="SMR" id="Q96EP5"/>
<dbReference type="BioGRID" id="117730">
    <property type="interactions" value="171"/>
</dbReference>
<dbReference type="FunCoup" id="Q96EP5">
    <property type="interactions" value="2071"/>
</dbReference>
<dbReference type="IntAct" id="Q96EP5">
    <property type="interactions" value="44"/>
</dbReference>
<dbReference type="MINT" id="Q96EP5"/>
<dbReference type="STRING" id="9606.ENSP00000233078"/>
<dbReference type="GlyGen" id="Q96EP5">
    <property type="glycosylation" value="2 sites, 1 O-linked glycan (1 site)"/>
</dbReference>
<dbReference type="iPTMnet" id="Q96EP5"/>
<dbReference type="MetOSite" id="Q96EP5"/>
<dbReference type="PhosphoSitePlus" id="Q96EP5"/>
<dbReference type="SwissPalm" id="Q96EP5"/>
<dbReference type="BioMuta" id="DAZAP1"/>
<dbReference type="DMDM" id="44887869"/>
<dbReference type="REPRODUCTION-2DPAGE" id="IPI00165230"/>
<dbReference type="jPOST" id="Q96EP5"/>
<dbReference type="MassIVE" id="Q96EP5"/>
<dbReference type="PaxDb" id="9606-ENSP00000233078"/>
<dbReference type="PeptideAtlas" id="Q96EP5"/>
<dbReference type="ProteomicsDB" id="76437">
    <molecule id="Q96EP5-1"/>
</dbReference>
<dbReference type="ProteomicsDB" id="76438">
    <molecule id="Q96EP5-2"/>
</dbReference>
<dbReference type="Pumba" id="Q96EP5"/>
<dbReference type="Antibodypedia" id="1414">
    <property type="antibodies" value="196 antibodies from 25 providers"/>
</dbReference>
<dbReference type="DNASU" id="26528"/>
<dbReference type="Ensembl" id="ENST00000233078.9">
    <molecule id="Q96EP5-1"/>
    <property type="protein sequence ID" value="ENSP00000233078.4"/>
    <property type="gene ID" value="ENSG00000071626.17"/>
</dbReference>
<dbReference type="Ensembl" id="ENST00000336761.10">
    <molecule id="Q96EP5-2"/>
    <property type="protein sequence ID" value="ENSP00000337132.5"/>
    <property type="gene ID" value="ENSG00000071626.17"/>
</dbReference>
<dbReference type="GeneID" id="26528"/>
<dbReference type="KEGG" id="hsa:26528"/>
<dbReference type="MANE-Select" id="ENST00000233078.9">
    <property type="protein sequence ID" value="ENSP00000233078.4"/>
    <property type="RefSeq nucleotide sequence ID" value="NM_018959.4"/>
    <property type="RefSeq protein sequence ID" value="NP_061832.2"/>
</dbReference>
<dbReference type="UCSC" id="uc002lsm.5">
    <molecule id="Q96EP5-1"/>
    <property type="organism name" value="human"/>
</dbReference>
<dbReference type="AGR" id="HGNC:2683"/>
<dbReference type="CTD" id="26528"/>
<dbReference type="DisGeNET" id="26528"/>
<dbReference type="GeneCards" id="DAZAP1"/>
<dbReference type="HGNC" id="HGNC:2683">
    <property type="gene designation" value="DAZAP1"/>
</dbReference>
<dbReference type="HPA" id="ENSG00000071626">
    <property type="expression patterns" value="Low tissue specificity"/>
</dbReference>
<dbReference type="MIM" id="607430">
    <property type="type" value="gene"/>
</dbReference>
<dbReference type="neXtProt" id="NX_Q96EP5"/>
<dbReference type="OpenTargets" id="ENSG00000071626"/>
<dbReference type="PharmGKB" id="PA27153"/>
<dbReference type="VEuPathDB" id="HostDB:ENSG00000071626"/>
<dbReference type="eggNOG" id="KOG4205">
    <property type="taxonomic scope" value="Eukaryota"/>
</dbReference>
<dbReference type="GeneTree" id="ENSGT00940000156757"/>
<dbReference type="InParanoid" id="Q96EP5"/>
<dbReference type="OMA" id="FVMFRKA"/>
<dbReference type="OrthoDB" id="1875751at2759"/>
<dbReference type="PAN-GO" id="Q96EP5">
    <property type="GO annotations" value="7 GO annotations based on evolutionary models"/>
</dbReference>
<dbReference type="PhylomeDB" id="Q96EP5"/>
<dbReference type="TreeFam" id="TF314808"/>
<dbReference type="PathwayCommons" id="Q96EP5"/>
<dbReference type="SignaLink" id="Q96EP5"/>
<dbReference type="SIGNOR" id="Q96EP5"/>
<dbReference type="BioGRID-ORCS" id="26528">
    <property type="hits" value="111 hits in 1161 CRISPR screens"/>
</dbReference>
<dbReference type="CD-CODE" id="1A18FFC4">
    <property type="entry name" value="Paraspeckle"/>
</dbReference>
<dbReference type="CD-CODE" id="232F8A39">
    <property type="entry name" value="P-body"/>
</dbReference>
<dbReference type="CD-CODE" id="2B1872D5">
    <property type="entry name" value="Balbiani body"/>
</dbReference>
<dbReference type="CD-CODE" id="DEE660B4">
    <property type="entry name" value="Stress granule"/>
</dbReference>
<dbReference type="ChiTaRS" id="DAZAP1">
    <property type="organism name" value="human"/>
</dbReference>
<dbReference type="EvolutionaryTrace" id="Q96EP5"/>
<dbReference type="GeneWiki" id="DAZ_associated_protein_1"/>
<dbReference type="GenomeRNAi" id="26528"/>
<dbReference type="Pharos" id="Q96EP5">
    <property type="development level" value="Tbio"/>
</dbReference>
<dbReference type="PRO" id="PR:Q96EP5"/>
<dbReference type="Proteomes" id="UP000005640">
    <property type="component" value="Chromosome 19"/>
</dbReference>
<dbReference type="RNAct" id="Q96EP5">
    <property type="molecule type" value="protein"/>
</dbReference>
<dbReference type="Bgee" id="ENSG00000071626">
    <property type="expression patterns" value="Expressed in left testis and 193 other cell types or tissues"/>
</dbReference>
<dbReference type="ExpressionAtlas" id="Q96EP5">
    <property type="expression patterns" value="baseline and differential"/>
</dbReference>
<dbReference type="GO" id="GO:0005829">
    <property type="term" value="C:cytosol"/>
    <property type="evidence" value="ECO:0000314"/>
    <property type="project" value="HPA"/>
</dbReference>
<dbReference type="GO" id="GO:0001673">
    <property type="term" value="C:male germ cell nucleus"/>
    <property type="evidence" value="ECO:0007669"/>
    <property type="project" value="Ensembl"/>
</dbReference>
<dbReference type="GO" id="GO:0005654">
    <property type="term" value="C:nucleoplasm"/>
    <property type="evidence" value="ECO:0000314"/>
    <property type="project" value="HPA"/>
</dbReference>
<dbReference type="GO" id="GO:0005634">
    <property type="term" value="C:nucleus"/>
    <property type="evidence" value="ECO:0000318"/>
    <property type="project" value="GO_Central"/>
</dbReference>
<dbReference type="GO" id="GO:0032991">
    <property type="term" value="C:protein-containing complex"/>
    <property type="evidence" value="ECO:0000314"/>
    <property type="project" value="UniProtKB"/>
</dbReference>
<dbReference type="GO" id="GO:1990904">
    <property type="term" value="C:ribonucleoprotein complex"/>
    <property type="evidence" value="ECO:0000315"/>
    <property type="project" value="UniProtKB"/>
</dbReference>
<dbReference type="GO" id="GO:0003730">
    <property type="term" value="F:mRNA 3'-UTR binding"/>
    <property type="evidence" value="ECO:0000318"/>
    <property type="project" value="GO_Central"/>
</dbReference>
<dbReference type="GO" id="GO:0034046">
    <property type="term" value="F:poly(G) binding"/>
    <property type="evidence" value="ECO:0000315"/>
    <property type="project" value="UniProtKB"/>
</dbReference>
<dbReference type="GO" id="GO:0008266">
    <property type="term" value="F:poly(U) RNA binding"/>
    <property type="evidence" value="ECO:0000315"/>
    <property type="project" value="UniProtKB"/>
</dbReference>
<dbReference type="GO" id="GO:0003723">
    <property type="term" value="F:RNA binding"/>
    <property type="evidence" value="ECO:0007005"/>
    <property type="project" value="UniProtKB"/>
</dbReference>
<dbReference type="GO" id="GO:0035613">
    <property type="term" value="F:RNA stem-loop binding"/>
    <property type="evidence" value="ECO:0007669"/>
    <property type="project" value="Ensembl"/>
</dbReference>
<dbReference type="GO" id="GO:0030154">
    <property type="term" value="P:cell differentiation"/>
    <property type="evidence" value="ECO:0007669"/>
    <property type="project" value="UniProtKB-KW"/>
</dbReference>
<dbReference type="GO" id="GO:0048144">
    <property type="term" value="P:fibroblast proliferation"/>
    <property type="evidence" value="ECO:0007669"/>
    <property type="project" value="Ensembl"/>
</dbReference>
<dbReference type="GO" id="GO:0001893">
    <property type="term" value="P:maternal placenta development"/>
    <property type="evidence" value="ECO:0007669"/>
    <property type="project" value="Ensembl"/>
</dbReference>
<dbReference type="GO" id="GO:0048026">
    <property type="term" value="P:positive regulation of mRNA splicing, via spliceosome"/>
    <property type="evidence" value="ECO:0000318"/>
    <property type="project" value="GO_Central"/>
</dbReference>
<dbReference type="GO" id="GO:0007283">
    <property type="term" value="P:spermatogenesis"/>
    <property type="evidence" value="ECO:0000318"/>
    <property type="project" value="GO_Central"/>
</dbReference>
<dbReference type="CDD" id="cd12574">
    <property type="entry name" value="RRM1_DAZAP1"/>
    <property type="match status" value="1"/>
</dbReference>
<dbReference type="CDD" id="cd12327">
    <property type="entry name" value="RRM2_DAZAP1"/>
    <property type="match status" value="1"/>
</dbReference>
<dbReference type="FunFam" id="3.30.70.330:FF:000129">
    <property type="entry name" value="DAZ-associated protein 1 isoform X1"/>
    <property type="match status" value="1"/>
</dbReference>
<dbReference type="FunFam" id="3.30.70.330:FF:000093">
    <property type="entry name" value="Putative DAZ-associated protein 1"/>
    <property type="match status" value="1"/>
</dbReference>
<dbReference type="Gene3D" id="3.30.70.330">
    <property type="match status" value="2"/>
</dbReference>
<dbReference type="InterPro" id="IPR034134">
    <property type="entry name" value="DAZAP1_RRM1"/>
</dbReference>
<dbReference type="InterPro" id="IPR034131">
    <property type="entry name" value="DAZAP1_RRM2"/>
</dbReference>
<dbReference type="InterPro" id="IPR012677">
    <property type="entry name" value="Nucleotide-bd_a/b_plait_sf"/>
</dbReference>
<dbReference type="InterPro" id="IPR035979">
    <property type="entry name" value="RBD_domain_sf"/>
</dbReference>
<dbReference type="InterPro" id="IPR000504">
    <property type="entry name" value="RRM_dom"/>
</dbReference>
<dbReference type="PANTHER" id="PTHR48032">
    <property type="entry name" value="RNA-BINDING PROTEIN MUSASHI HOMOLOG RBP6"/>
    <property type="match status" value="1"/>
</dbReference>
<dbReference type="PANTHER" id="PTHR48032:SF18">
    <property type="entry name" value="RRM DOMAIN-CONTAINING PROTEIN"/>
    <property type="match status" value="1"/>
</dbReference>
<dbReference type="Pfam" id="PF00076">
    <property type="entry name" value="RRM_1"/>
    <property type="match status" value="2"/>
</dbReference>
<dbReference type="SMART" id="SM00360">
    <property type="entry name" value="RRM"/>
    <property type="match status" value="2"/>
</dbReference>
<dbReference type="SUPFAM" id="SSF54928">
    <property type="entry name" value="RNA-binding domain, RBD"/>
    <property type="match status" value="2"/>
</dbReference>
<dbReference type="PROSITE" id="PS50102">
    <property type="entry name" value="RRM"/>
    <property type="match status" value="2"/>
</dbReference>
<protein>
    <recommendedName>
        <fullName>DAZ-associated protein 1</fullName>
    </recommendedName>
    <alternativeName>
        <fullName>Deleted in azoospermia-associated protein 1</fullName>
    </alternativeName>
</protein>
<sequence>MNNSGADEIGKLFVGGLDWSTTQETLRSYFSQYGEVVDCVIMKDKTTNQSRGFGFVKFKDPNCVGTVLASRPHTLDGRNIDPKPCTPRGMQPERTRPKEGWQKGPRSDNSKSNKIFVGGIPHNCGETELREYFKKFGVVTEVVMIYDAEKQRPRGFGFITFEDEQSVDQAVNMHFHDIMGKKVEVKRAEPRDSKSQAPGQPGASQWGSRVVPNAANGWAGQPPPTWQQGYGPQGMWVPAGQAIGGYGPPPAGRGAPPPPPPFTSYIVSTPPGGFPPPQGFPQGYGAPPQFSFGYGPPPPPPDQFAPPGVPPPPATPGAAPLAFPPPPSQAAPDMSKPPTAQPDFPYGQYAGYGQDLSGFGQGFSDPSQQPPSYGGPSVPGSGGPPAGGSGFGRGQNHNVQGFHPYRR</sequence>
<gene>
    <name type="primary">DAZAP1</name>
</gene>
<name>DAZP1_HUMAN</name>
<evidence type="ECO:0000250" key="1"/>
<evidence type="ECO:0000255" key="2">
    <source>
        <dbReference type="PROSITE-ProRule" id="PRU00176"/>
    </source>
</evidence>
<evidence type="ECO:0000256" key="3">
    <source>
        <dbReference type="SAM" id="MobiDB-lite"/>
    </source>
</evidence>
<evidence type="ECO:0000269" key="4">
    <source>
    </source>
</evidence>
<evidence type="ECO:0000269" key="5">
    <source>
    </source>
</evidence>
<evidence type="ECO:0000269" key="6">
    <source>
    </source>
</evidence>
<evidence type="ECO:0000269" key="7">
    <source ref="3"/>
</evidence>
<evidence type="ECO:0000303" key="8">
    <source>
    </source>
</evidence>
<evidence type="ECO:0000305" key="9"/>
<evidence type="ECO:0007744" key="10">
    <source>
    </source>
</evidence>
<evidence type="ECO:0007744" key="11">
    <source>
    </source>
</evidence>
<evidence type="ECO:0007744" key="12">
    <source>
    </source>
</evidence>
<evidence type="ECO:0007829" key="13">
    <source>
        <dbReference type="PDB" id="2DGS"/>
    </source>
</evidence>
<evidence type="ECO:0007829" key="14">
    <source>
        <dbReference type="PDB" id="2DH8"/>
    </source>
</evidence>
<accession>Q96EP5</accession>
<accession>Q96MJ3</accession>
<accession>Q9NRR9</accession>
<feature type="chain" id="PRO_0000081565" description="DAZ-associated protein 1">
    <location>
        <begin position="1"/>
        <end position="407"/>
    </location>
</feature>
<feature type="domain" description="RRM 1" evidence="2">
    <location>
        <begin position="10"/>
        <end position="97"/>
    </location>
</feature>
<feature type="domain" description="RRM 2" evidence="2">
    <location>
        <begin position="113"/>
        <end position="190"/>
    </location>
</feature>
<feature type="region of interest" description="Disordered" evidence="3">
    <location>
        <begin position="74"/>
        <end position="117"/>
    </location>
</feature>
<feature type="region of interest" description="Disordered" evidence="3">
    <location>
        <begin position="185"/>
        <end position="407"/>
    </location>
</feature>
<feature type="compositionally biased region" description="Basic and acidic residues" evidence="3">
    <location>
        <begin position="91"/>
        <end position="111"/>
    </location>
</feature>
<feature type="compositionally biased region" description="Basic and acidic residues" evidence="3">
    <location>
        <begin position="185"/>
        <end position="194"/>
    </location>
</feature>
<feature type="compositionally biased region" description="Polar residues" evidence="3">
    <location>
        <begin position="195"/>
        <end position="207"/>
    </location>
</feature>
<feature type="compositionally biased region" description="Pro residues" evidence="3">
    <location>
        <begin position="247"/>
        <end position="262"/>
    </location>
</feature>
<feature type="compositionally biased region" description="Low complexity" evidence="3">
    <location>
        <begin position="280"/>
        <end position="294"/>
    </location>
</feature>
<feature type="compositionally biased region" description="Pro residues" evidence="3">
    <location>
        <begin position="295"/>
        <end position="315"/>
    </location>
</feature>
<feature type="compositionally biased region" description="Low complexity" evidence="3">
    <location>
        <begin position="364"/>
        <end position="379"/>
    </location>
</feature>
<feature type="compositionally biased region" description="Gly residues" evidence="3">
    <location>
        <begin position="380"/>
        <end position="393"/>
    </location>
</feature>
<feature type="modified residue" description="N-acetylmethionine" evidence="7 10 11">
    <location>
        <position position="1"/>
    </location>
</feature>
<feature type="modified residue" description="N6-acetyllysine" evidence="6">
    <location>
        <position position="150"/>
    </location>
</feature>
<feature type="modified residue" description="Omega-N-methylarginine" evidence="12">
    <location>
        <position position="253"/>
    </location>
</feature>
<feature type="splice variant" id="VSP_009441" description="In isoform 2." evidence="8">
    <original>AGYGQDLSGFGQGFSDPSQQPPSYGGPSVPGSGGPPAGGSGFGRGQNHNVQGFHPYRR</original>
    <variation>GLGSYSPAPPGCGPHFVYSLMVRLSSDVA</variation>
    <location>
        <begin position="350"/>
        <end position="407"/>
    </location>
</feature>
<feature type="sequence variant" id="VAR_035480" description="In a breast cancer sample; somatic mutation." evidence="5">
    <original>S</original>
    <variation>T</variation>
    <location>
        <position position="381"/>
    </location>
</feature>
<feature type="sequence conflict" description="In Ref. 1; AAF78364." evidence="9" ref="1">
    <original>N</original>
    <variation>Y</variation>
    <location>
        <position position="109"/>
    </location>
</feature>
<feature type="strand" evidence="14">
    <location>
        <begin position="6"/>
        <end position="12"/>
    </location>
</feature>
<feature type="helix" evidence="14">
    <location>
        <begin position="23"/>
        <end position="31"/>
    </location>
</feature>
<feature type="strand" evidence="14">
    <location>
        <begin position="36"/>
        <end position="43"/>
    </location>
</feature>
<feature type="strand" evidence="14">
    <location>
        <begin position="45"/>
        <end position="47"/>
    </location>
</feature>
<feature type="strand" evidence="14">
    <location>
        <begin position="50"/>
        <end position="60"/>
    </location>
</feature>
<feature type="helix" evidence="14">
    <location>
        <begin position="63"/>
        <end position="70"/>
    </location>
</feature>
<feature type="strand" evidence="14">
    <location>
        <begin position="72"/>
        <end position="75"/>
    </location>
</feature>
<feature type="strand" evidence="14">
    <location>
        <begin position="78"/>
        <end position="81"/>
    </location>
</feature>
<feature type="strand" evidence="13">
    <location>
        <begin position="114"/>
        <end position="119"/>
    </location>
</feature>
<feature type="helix" evidence="13">
    <location>
        <begin position="126"/>
        <end position="133"/>
    </location>
</feature>
<feature type="strand" evidence="13">
    <location>
        <begin position="134"/>
        <end position="137"/>
    </location>
</feature>
<feature type="strand" evidence="13">
    <location>
        <begin position="139"/>
        <end position="144"/>
    </location>
</feature>
<feature type="turn" evidence="13">
    <location>
        <begin position="148"/>
        <end position="150"/>
    </location>
</feature>
<feature type="strand" evidence="13">
    <location>
        <begin position="155"/>
        <end position="163"/>
    </location>
</feature>
<feature type="helix" evidence="13">
    <location>
        <begin position="164"/>
        <end position="173"/>
    </location>
</feature>
<feature type="strand" evidence="13">
    <location>
        <begin position="177"/>
        <end position="180"/>
    </location>
</feature>
<feature type="strand" evidence="13">
    <location>
        <begin position="184"/>
        <end position="187"/>
    </location>
</feature>
<reference key="1">
    <citation type="journal article" date="2000" name="Genomics">
        <title>Identification of two novel proteins that interact with germ-cell-specific RNA-binding proteins DAZ and DAZL1.</title>
        <authorList>
            <person name="Tsui S."/>
            <person name="Dai T."/>
            <person name="Roettger S."/>
            <person name="Schempp W."/>
            <person name="Salido E.C."/>
            <person name="Yen P.H."/>
        </authorList>
    </citation>
    <scope>NUCLEOTIDE SEQUENCE [MRNA] (ISOFORM 1)</scope>
    <scope>RNA-BINDING</scope>
    <scope>TISSUE SPECIFICITY</scope>
    <scope>INTERACTION WITH DAZ AND DAZL</scope>
    <source>
        <tissue>Testis</tissue>
    </source>
</reference>
<reference key="2">
    <citation type="journal article" date="2004" name="Genome Res.">
        <title>The status, quality, and expansion of the NIH full-length cDNA project: the Mammalian Gene Collection (MGC).</title>
        <authorList>
            <consortium name="The MGC Project Team"/>
        </authorList>
    </citation>
    <scope>NUCLEOTIDE SEQUENCE [LARGE SCALE MRNA] (ISOFORM 1)</scope>
    <source>
        <tissue>Lung</tissue>
    </source>
</reference>
<reference key="3">
    <citation type="submission" date="2008-12" db="UniProtKB">
        <authorList>
            <person name="Bienvenut W.V."/>
            <person name="Lilla S."/>
            <person name="von Kriegsheim A."/>
            <person name="Lempens A."/>
            <person name="Kolch W."/>
        </authorList>
    </citation>
    <scope>PROTEIN SEQUENCE OF 1-27; 136-150 AND 195-209</scope>
    <scope>ACETYLATION AT MET-1</scope>
    <scope>IDENTIFICATION BY MASS SPECTROMETRY</scope>
    <source>
        <tissue>Ovarian carcinoma</tissue>
    </source>
</reference>
<reference key="4">
    <citation type="journal article" date="2004" name="Nat. Genet.">
        <title>Complete sequencing and characterization of 21,243 full-length human cDNAs.</title>
        <authorList>
            <person name="Ota T."/>
            <person name="Suzuki Y."/>
            <person name="Nishikawa T."/>
            <person name="Otsuki T."/>
            <person name="Sugiyama T."/>
            <person name="Irie R."/>
            <person name="Wakamatsu A."/>
            <person name="Hayashi K."/>
            <person name="Sato H."/>
            <person name="Nagai K."/>
            <person name="Kimura K."/>
            <person name="Makita H."/>
            <person name="Sekine M."/>
            <person name="Obayashi M."/>
            <person name="Nishi T."/>
            <person name="Shibahara T."/>
            <person name="Tanaka T."/>
            <person name="Ishii S."/>
            <person name="Yamamoto J."/>
            <person name="Saito K."/>
            <person name="Kawai Y."/>
            <person name="Isono Y."/>
            <person name="Nakamura Y."/>
            <person name="Nagahari K."/>
            <person name="Murakami K."/>
            <person name="Yasuda T."/>
            <person name="Iwayanagi T."/>
            <person name="Wagatsuma M."/>
            <person name="Shiratori A."/>
            <person name="Sudo H."/>
            <person name="Hosoiri T."/>
            <person name="Kaku Y."/>
            <person name="Kodaira H."/>
            <person name="Kondo H."/>
            <person name="Sugawara M."/>
            <person name="Takahashi M."/>
            <person name="Kanda K."/>
            <person name="Yokoi T."/>
            <person name="Furuya T."/>
            <person name="Kikkawa E."/>
            <person name="Omura Y."/>
            <person name="Abe K."/>
            <person name="Kamihara K."/>
            <person name="Katsuta N."/>
            <person name="Sato K."/>
            <person name="Tanikawa M."/>
            <person name="Yamazaki M."/>
            <person name="Ninomiya K."/>
            <person name="Ishibashi T."/>
            <person name="Yamashita H."/>
            <person name="Murakawa K."/>
            <person name="Fujimori K."/>
            <person name="Tanai H."/>
            <person name="Kimata M."/>
            <person name="Watanabe M."/>
            <person name="Hiraoka S."/>
            <person name="Chiba Y."/>
            <person name="Ishida S."/>
            <person name="Ono Y."/>
            <person name="Takiguchi S."/>
            <person name="Watanabe S."/>
            <person name="Yosida M."/>
            <person name="Hotuta T."/>
            <person name="Kusano J."/>
            <person name="Kanehori K."/>
            <person name="Takahashi-Fujii A."/>
            <person name="Hara H."/>
            <person name="Tanase T.-O."/>
            <person name="Nomura Y."/>
            <person name="Togiya S."/>
            <person name="Komai F."/>
            <person name="Hara R."/>
            <person name="Takeuchi K."/>
            <person name="Arita M."/>
            <person name="Imose N."/>
            <person name="Musashino K."/>
            <person name="Yuuki H."/>
            <person name="Oshima A."/>
            <person name="Sasaki N."/>
            <person name="Aotsuka S."/>
            <person name="Yoshikawa Y."/>
            <person name="Matsunawa H."/>
            <person name="Ichihara T."/>
            <person name="Shiohata N."/>
            <person name="Sano S."/>
            <person name="Moriya S."/>
            <person name="Momiyama H."/>
            <person name="Satoh N."/>
            <person name="Takami S."/>
            <person name="Terashima Y."/>
            <person name="Suzuki O."/>
            <person name="Nakagawa S."/>
            <person name="Senoh A."/>
            <person name="Mizoguchi H."/>
            <person name="Goto Y."/>
            <person name="Shimizu F."/>
            <person name="Wakebe H."/>
            <person name="Hishigaki H."/>
            <person name="Watanabe T."/>
            <person name="Sugiyama A."/>
            <person name="Takemoto M."/>
            <person name="Kawakami B."/>
            <person name="Yamazaki M."/>
            <person name="Watanabe K."/>
            <person name="Kumagai A."/>
            <person name="Itakura S."/>
            <person name="Fukuzumi Y."/>
            <person name="Fujimori Y."/>
            <person name="Komiyama M."/>
            <person name="Tashiro H."/>
            <person name="Tanigami A."/>
            <person name="Fujiwara T."/>
            <person name="Ono T."/>
            <person name="Yamada K."/>
            <person name="Fujii Y."/>
            <person name="Ozaki K."/>
            <person name="Hirao M."/>
            <person name="Ohmori Y."/>
            <person name="Kawabata A."/>
            <person name="Hikiji T."/>
            <person name="Kobatake N."/>
            <person name="Inagaki H."/>
            <person name="Ikema Y."/>
            <person name="Okamoto S."/>
            <person name="Okitani R."/>
            <person name="Kawakami T."/>
            <person name="Noguchi S."/>
            <person name="Itoh T."/>
            <person name="Shigeta K."/>
            <person name="Senba T."/>
            <person name="Matsumura K."/>
            <person name="Nakajima Y."/>
            <person name="Mizuno T."/>
            <person name="Morinaga M."/>
            <person name="Sasaki M."/>
            <person name="Togashi T."/>
            <person name="Oyama M."/>
            <person name="Hata H."/>
            <person name="Watanabe M."/>
            <person name="Komatsu T."/>
            <person name="Mizushima-Sugano J."/>
            <person name="Satoh T."/>
            <person name="Shirai Y."/>
            <person name="Takahashi Y."/>
            <person name="Nakagawa K."/>
            <person name="Okumura K."/>
            <person name="Nagase T."/>
            <person name="Nomura N."/>
            <person name="Kikuchi H."/>
            <person name="Masuho Y."/>
            <person name="Yamashita R."/>
            <person name="Nakai K."/>
            <person name="Yada T."/>
            <person name="Nakamura Y."/>
            <person name="Ohara O."/>
            <person name="Isogai T."/>
            <person name="Sugano S."/>
        </authorList>
    </citation>
    <scope>NUCLEOTIDE SEQUENCE [LARGE SCALE MRNA] OF 59-390 (ISOFORM 2)</scope>
    <source>
        <tissue>Prostate</tissue>
    </source>
</reference>
<reference key="5">
    <citation type="journal article" date="2003" name="Nature">
        <title>Proteomic characterization of the human centrosome by protein correlation profiling.</title>
        <authorList>
            <person name="Andersen J.S."/>
            <person name="Wilkinson C.J."/>
            <person name="Mayor T."/>
            <person name="Mortensen P."/>
            <person name="Nigg E.A."/>
            <person name="Mann M."/>
        </authorList>
    </citation>
    <scope>IDENTIFICATION BY MASS SPECTROMETRY</scope>
    <source>
        <tissue>Lymphoblast</tissue>
    </source>
</reference>
<reference key="6">
    <citation type="journal article" date="2007" name="Science">
        <title>ATM and ATR substrate analysis reveals extensive protein networks responsive to DNA damage.</title>
        <authorList>
            <person name="Matsuoka S."/>
            <person name="Ballif B.A."/>
            <person name="Smogorzewska A."/>
            <person name="McDonald E.R. III"/>
            <person name="Hurov K.E."/>
            <person name="Luo J."/>
            <person name="Bakalarski C.E."/>
            <person name="Zhao Z."/>
            <person name="Solimini N."/>
            <person name="Lerenthal Y."/>
            <person name="Shiloh Y."/>
            <person name="Gygi S.P."/>
            <person name="Elledge S.J."/>
        </authorList>
    </citation>
    <scope>IDENTIFICATION BY MASS SPECTROMETRY [LARGE SCALE ANALYSIS]</scope>
    <source>
        <tissue>Embryonic kidney</tissue>
    </source>
</reference>
<reference key="7">
    <citation type="journal article" date="2009" name="Anal. Chem.">
        <title>Lys-N and trypsin cover complementary parts of the phosphoproteome in a refined SCX-based approach.</title>
        <authorList>
            <person name="Gauci S."/>
            <person name="Helbig A.O."/>
            <person name="Slijper M."/>
            <person name="Krijgsveld J."/>
            <person name="Heck A.J."/>
            <person name="Mohammed S."/>
        </authorList>
    </citation>
    <scope>ACETYLATION [LARGE SCALE ANALYSIS] AT MET-1</scope>
    <scope>IDENTIFICATION BY MASS SPECTROMETRY [LARGE SCALE ANALYSIS]</scope>
</reference>
<reference key="8">
    <citation type="journal article" date="2011" name="BMC Syst. Biol.">
        <title>Initial characterization of the human central proteome.</title>
        <authorList>
            <person name="Burkard T.R."/>
            <person name="Planyavsky M."/>
            <person name="Kaupe I."/>
            <person name="Breitwieser F.P."/>
            <person name="Buerckstuemmer T."/>
            <person name="Bennett K.L."/>
            <person name="Superti-Furga G."/>
            <person name="Colinge J."/>
        </authorList>
    </citation>
    <scope>IDENTIFICATION BY MASS SPECTROMETRY [LARGE SCALE ANALYSIS]</scope>
</reference>
<reference key="9">
    <citation type="journal article" date="2012" name="Gene">
        <title>Acetylation of Prrp K150 regulates the subcellular localization.</title>
        <authorList>
            <person name="Sasaki K."/>
            <person name="Suzuki A."/>
            <person name="Kagatsume S."/>
            <person name="Ono M."/>
            <person name="Matsuzawa K."/>
            <person name="Taguchi Y."/>
            <person name="Kurihara Y."/>
        </authorList>
    </citation>
    <scope>ACETYLATION AT LYS-150</scope>
    <scope>SUBCELLULAR LOCATION</scope>
</reference>
<reference key="10">
    <citation type="journal article" date="2012" name="Mol. Cell. Proteomics">
        <title>Comparative large-scale characterisation of plant vs. mammal proteins reveals similar and idiosyncratic N-alpha acetylation features.</title>
        <authorList>
            <person name="Bienvenut W.V."/>
            <person name="Sumpton D."/>
            <person name="Martinez A."/>
            <person name="Lilla S."/>
            <person name="Espagne C."/>
            <person name="Meinnel T."/>
            <person name="Giglione C."/>
        </authorList>
    </citation>
    <scope>ACETYLATION [LARGE SCALE ANALYSIS] AT MET-1</scope>
    <scope>IDENTIFICATION BY MASS SPECTROMETRY [LARGE SCALE ANALYSIS]</scope>
</reference>
<reference key="11">
    <citation type="journal article" date="2014" name="J. Proteomics">
        <title>An enzyme assisted RP-RPLC approach for in-depth analysis of human liver phosphoproteome.</title>
        <authorList>
            <person name="Bian Y."/>
            <person name="Song C."/>
            <person name="Cheng K."/>
            <person name="Dong M."/>
            <person name="Wang F."/>
            <person name="Huang J."/>
            <person name="Sun D."/>
            <person name="Wang L."/>
            <person name="Ye M."/>
            <person name="Zou H."/>
        </authorList>
    </citation>
    <scope>IDENTIFICATION BY MASS SPECTROMETRY [LARGE SCALE ANALYSIS]</scope>
    <source>
        <tissue>Liver</tissue>
    </source>
</reference>
<reference key="12">
    <citation type="journal article" date="2014" name="Mol. Cell. Proteomics">
        <title>Immunoaffinity enrichment and mass spectrometry analysis of protein methylation.</title>
        <authorList>
            <person name="Guo A."/>
            <person name="Gu H."/>
            <person name="Zhou J."/>
            <person name="Mulhern D."/>
            <person name="Wang Y."/>
            <person name="Lee K.A."/>
            <person name="Yang V."/>
            <person name="Aguiar M."/>
            <person name="Kornhauser J."/>
            <person name="Jia X."/>
            <person name="Ren J."/>
            <person name="Beausoleil S.A."/>
            <person name="Silva J.C."/>
            <person name="Vemulapalli V."/>
            <person name="Bedford M.T."/>
            <person name="Comb M.J."/>
        </authorList>
    </citation>
    <scope>METHYLATION [LARGE SCALE ANALYSIS] AT ARG-253</scope>
    <scope>IDENTIFICATION BY MASS SPECTROMETRY [LARGE SCALE ANALYSIS]</scope>
    <source>
        <tissue>Colon carcinoma</tissue>
    </source>
</reference>
<reference key="13">
    <citation type="submission" date="2006-09" db="PDB data bank">
        <title>Solution structure of the N-terminal and of the second RNA binding domain in DAZ-associated protein 1.</title>
        <authorList>
            <consortium name="RIKEN structural genomics initiative (RSGI)"/>
        </authorList>
    </citation>
    <scope>STRUCTURE BY NMR OF 1-198</scope>
</reference>
<reference key="14">
    <citation type="journal article" date="2006" name="Science">
        <title>The consensus coding sequences of human breast and colorectal cancers.</title>
        <authorList>
            <person name="Sjoeblom T."/>
            <person name="Jones S."/>
            <person name="Wood L.D."/>
            <person name="Parsons D.W."/>
            <person name="Lin J."/>
            <person name="Barber T.D."/>
            <person name="Mandelker D."/>
            <person name="Leary R.J."/>
            <person name="Ptak J."/>
            <person name="Silliman N."/>
            <person name="Szabo S."/>
            <person name="Buckhaults P."/>
            <person name="Farrell C."/>
            <person name="Meeh P."/>
            <person name="Markowitz S.D."/>
            <person name="Willis J."/>
            <person name="Dawson D."/>
            <person name="Willson J.K.V."/>
            <person name="Gazdar A.F."/>
            <person name="Hartigan J."/>
            <person name="Wu L."/>
            <person name="Liu C."/>
            <person name="Parmigiani G."/>
            <person name="Park B.H."/>
            <person name="Bachman K.E."/>
            <person name="Papadopoulos N."/>
            <person name="Vogelstein B."/>
            <person name="Kinzler K.W."/>
            <person name="Velculescu V.E."/>
        </authorList>
    </citation>
    <scope>VARIANT [LARGE SCALE ANALYSIS] THR-381</scope>
</reference>
<organism>
    <name type="scientific">Homo sapiens</name>
    <name type="common">Human</name>
    <dbReference type="NCBI Taxonomy" id="9606"/>
    <lineage>
        <taxon>Eukaryota</taxon>
        <taxon>Metazoa</taxon>
        <taxon>Chordata</taxon>
        <taxon>Craniata</taxon>
        <taxon>Vertebrata</taxon>
        <taxon>Euteleostomi</taxon>
        <taxon>Mammalia</taxon>
        <taxon>Eutheria</taxon>
        <taxon>Euarchontoglires</taxon>
        <taxon>Primates</taxon>
        <taxon>Haplorrhini</taxon>
        <taxon>Catarrhini</taxon>
        <taxon>Hominidae</taxon>
        <taxon>Homo</taxon>
    </lineage>
</organism>
<proteinExistence type="evidence at protein level"/>
<keyword id="KW-0002">3D-structure</keyword>
<keyword id="KW-0007">Acetylation</keyword>
<keyword id="KW-0025">Alternative splicing</keyword>
<keyword id="KW-0963">Cytoplasm</keyword>
<keyword id="KW-0217">Developmental protein</keyword>
<keyword id="KW-0221">Differentiation</keyword>
<keyword id="KW-0903">Direct protein sequencing</keyword>
<keyword id="KW-0488">Methylation</keyword>
<keyword id="KW-0539">Nucleus</keyword>
<keyword id="KW-1267">Proteomics identification</keyword>
<keyword id="KW-1185">Reference proteome</keyword>
<keyword id="KW-0677">Repeat</keyword>
<keyword id="KW-0694">RNA-binding</keyword>
<keyword id="KW-0744">Spermatogenesis</keyword>
<comment type="function">
    <text>RNA-binding protein, which may be required during spermatogenesis.</text>
</comment>
<comment type="subunit">
    <text evidence="4">Interacts with DAZ and DAZL.</text>
</comment>
<comment type="interaction">
    <interactant intactId="EBI-2133162">
        <id>Q96EP5</id>
    </interactant>
    <interactant intactId="EBI-997955">
        <id>Q9NQZ3</id>
        <label>DAZ1</label>
    </interactant>
    <organismsDiffer>false</organismsDiffer>
    <experiments>3</experiments>
</comment>
<comment type="interaction">
    <interactant intactId="EBI-2133162">
        <id>Q96EP5</id>
    </interactant>
    <interactant intactId="EBI-607085">
        <id>P09012</id>
        <label>SNRPA</label>
    </interactant>
    <organismsDiffer>false</organismsDiffer>
    <experiments>3</experiments>
</comment>
<comment type="subcellular location">
    <subcellularLocation>
        <location evidence="6">Cytoplasm</location>
    </subcellularLocation>
    <subcellularLocation>
        <location evidence="6">Nucleus</location>
    </subcellularLocation>
    <text evidence="1">Predominantly cytoplasmic (By similarity). Nuclear at some stages of spermatozoides development. In midpachytene spermatocytes, it is localized in both the cytoplasm and the nuclei and is clearly excluded from the sex vesicles. In round spermatids, it localizes mainly in the nuclei, whereas in elongated spermatids, it localizes to the cytoplasm (By similarity).</text>
</comment>
<comment type="alternative products">
    <event type="alternative splicing"/>
    <isoform>
        <id>Q96EP5-1</id>
        <name>1</name>
        <sequence type="displayed"/>
    </isoform>
    <isoform>
        <id>Q96EP5-2</id>
        <name>2</name>
        <sequence type="described" ref="VSP_009441"/>
    </isoform>
</comment>
<comment type="tissue specificity">
    <text evidence="4">Mainly expressed in testis. Expressed to a lower level in thymus. Weakly or not expressed in heart, liver, brain, placenta, lung, skeletal muscle, kidney and pancreas.</text>
</comment>
<comment type="PTM">
    <text evidence="6 7">Acetylation at Lys-150 is predominantly observed in the nuclear fraction, and may regulate nucleocytoplasmic transport.</text>
</comment>
<comment type="sequence caution" evidence="9">
    <conflict type="erroneous initiation">
        <sequence resource="EMBL-CDS" id="BAB71295"/>
    </conflict>
</comment>